<gene>
    <name evidence="7" type="primary">Defb41</name>
    <name evidence="5" type="synonym">Defb16</name>
    <name evidence="5" type="synonym">Defb17</name>
    <name evidence="7" type="synonym">Gm15386</name>
</gene>
<name>DFB41_MOUSE</name>
<dbReference type="EMBL" id="DQ012027">
    <property type="protein sequence ID" value="AAY59763.1"/>
    <property type="molecule type" value="mRNA"/>
</dbReference>
<dbReference type="EMBL" id="DQ012028">
    <property type="protein sequence ID" value="AAY59764.1"/>
    <property type="molecule type" value="mRNA"/>
</dbReference>
<dbReference type="EMBL" id="AK020304">
    <property type="protein sequence ID" value="BAC25620.1"/>
    <property type="molecule type" value="mRNA"/>
</dbReference>
<dbReference type="EMBL" id="BK005412">
    <property type="protein sequence ID" value="DAA05561.1"/>
    <property type="molecule type" value="mRNA"/>
</dbReference>
<dbReference type="CCDS" id="CCDS35521.1">
    <molecule id="Q30KP6-1"/>
</dbReference>
<dbReference type="CCDS" id="CCDS48226.1">
    <molecule id="Q30KP6-2"/>
</dbReference>
<dbReference type="RefSeq" id="NP_001035116.1">
    <molecule id="Q30KP6-1"/>
    <property type="nucleotide sequence ID" value="NM_001040027.3"/>
</dbReference>
<dbReference type="RefSeq" id="NP_898947.1">
    <molecule id="Q30KP6-2"/>
    <property type="nucleotide sequence ID" value="NM_183124.4"/>
</dbReference>
<dbReference type="SMR" id="Q30KP6"/>
<dbReference type="FunCoup" id="Q30KP6">
    <property type="interactions" value="1"/>
</dbReference>
<dbReference type="STRING" id="10090.ENSMUSP00000095426"/>
<dbReference type="iPTMnet" id="Q30KP6"/>
<dbReference type="PaxDb" id="10090-ENSMUSP00000095426"/>
<dbReference type="ProteomicsDB" id="279639">
    <molecule id="Q30KP6-1"/>
</dbReference>
<dbReference type="Antibodypedia" id="57764">
    <property type="antibodies" value="10 antibodies from 4 providers"/>
</dbReference>
<dbReference type="DNASU" id="77673"/>
<dbReference type="Ensembl" id="ENSMUST00000088463.2">
    <molecule id="Q30KP6-2"/>
    <property type="protein sequence ID" value="ENSMUSP00000085811.2"/>
    <property type="gene ID" value="ENSMUSG00000067773.7"/>
</dbReference>
<dbReference type="Ensembl" id="ENSMUST00000097817.4">
    <molecule id="Q30KP6-1"/>
    <property type="protein sequence ID" value="ENSMUSP00000095426.4"/>
    <property type="gene ID" value="ENSMUSG00000067773.7"/>
</dbReference>
<dbReference type="GeneID" id="77673"/>
<dbReference type="KEGG" id="mmu:77673"/>
<dbReference type="UCSC" id="uc007ako.1">
    <molecule id="Q30KP6-1"/>
    <property type="organism name" value="mouse"/>
</dbReference>
<dbReference type="AGR" id="MGI:1924923"/>
<dbReference type="CTD" id="77673"/>
<dbReference type="MGI" id="MGI:1924923">
    <property type="gene designation" value="Defb41"/>
</dbReference>
<dbReference type="VEuPathDB" id="HostDB:ENSMUSG00000067773"/>
<dbReference type="eggNOG" id="ENOG502TGN0">
    <property type="taxonomic scope" value="Eukaryota"/>
</dbReference>
<dbReference type="GeneTree" id="ENSGT00390000006761"/>
<dbReference type="HOGENOM" id="CLU_187020_0_0_1"/>
<dbReference type="InParanoid" id="Q30KP6"/>
<dbReference type="OMA" id="IRIAYCM"/>
<dbReference type="OrthoDB" id="74814at9989"/>
<dbReference type="PhylomeDB" id="Q30KP6"/>
<dbReference type="BioGRID-ORCS" id="77673">
    <property type="hits" value="2 hits in 43 CRISPR screens"/>
</dbReference>
<dbReference type="ChiTaRS" id="Defb41">
    <property type="organism name" value="mouse"/>
</dbReference>
<dbReference type="PRO" id="PR:Q30KP6"/>
<dbReference type="Proteomes" id="UP000000589">
    <property type="component" value="Chromosome 1"/>
</dbReference>
<dbReference type="RNAct" id="Q30KP6">
    <property type="molecule type" value="protein"/>
</dbReference>
<dbReference type="Bgee" id="ENSMUSG00000067773">
    <property type="expression patterns" value="Expressed in spermatid and 16 other cell types or tissues"/>
</dbReference>
<dbReference type="GO" id="GO:0005576">
    <property type="term" value="C:extracellular region"/>
    <property type="evidence" value="ECO:0007669"/>
    <property type="project" value="UniProtKB-SubCell"/>
</dbReference>
<dbReference type="GO" id="GO:0042742">
    <property type="term" value="P:defense response to bacterium"/>
    <property type="evidence" value="ECO:0007669"/>
    <property type="project" value="UniProtKB-KW"/>
</dbReference>
<dbReference type="GO" id="GO:0045087">
    <property type="term" value="P:innate immune response"/>
    <property type="evidence" value="ECO:0007669"/>
    <property type="project" value="InterPro"/>
</dbReference>
<dbReference type="InterPro" id="IPR025933">
    <property type="entry name" value="Beta_defensin_dom"/>
</dbReference>
<dbReference type="PANTHER" id="PTHR20515">
    <property type="entry name" value="BETA-DEFENSIN"/>
    <property type="match status" value="1"/>
</dbReference>
<dbReference type="PANTHER" id="PTHR20515:SF19">
    <property type="entry name" value="BETA-DEFENSIN 110"/>
    <property type="match status" value="1"/>
</dbReference>
<dbReference type="Pfam" id="PF13841">
    <property type="entry name" value="Defensin_beta_2"/>
    <property type="match status" value="1"/>
</dbReference>
<evidence type="ECO:0000250" key="1">
    <source>
        <dbReference type="UniProtKB" id="P60022"/>
    </source>
</evidence>
<evidence type="ECO:0000250" key="2">
    <source>
        <dbReference type="UniProtKB" id="P81534"/>
    </source>
</evidence>
<evidence type="ECO:0000255" key="3"/>
<evidence type="ECO:0000269" key="4">
    <source>
    </source>
</evidence>
<evidence type="ECO:0000303" key="5">
    <source>
    </source>
</evidence>
<evidence type="ECO:0000305" key="6"/>
<evidence type="ECO:0000312" key="7">
    <source>
        <dbReference type="MGI" id="MGI:1924923"/>
    </source>
</evidence>
<comment type="function">
    <text evidence="2">Has bactericidal activity.</text>
</comment>
<comment type="function">
    <text evidence="4">Isoform 2 may play a role in the antimicrobial protection of sperm and urogenital tract epithelia.</text>
</comment>
<comment type="subcellular location">
    <subcellularLocation>
        <location evidence="1">Secreted</location>
    </subcellularLocation>
</comment>
<comment type="alternative products">
    <event type="alternative splicing"/>
    <isoform>
        <id>Q30KP6-1</id>
        <name>1</name>
        <sequence type="displayed"/>
    </isoform>
    <isoform>
        <id>Q30KP6-2</id>
        <name>2</name>
        <sequence type="described" ref="VSP_057922"/>
    </isoform>
</comment>
<comment type="tissue specificity">
    <text evidence="4">Isoform 2 is epididymis-specific and expressed mainly in the proximal caput.</text>
</comment>
<comment type="induction">
    <text evidence="4">By androgens.</text>
</comment>
<comment type="similarity">
    <text evidence="6">Belongs to the beta-defensin family.</text>
</comment>
<reference key="1">
    <citation type="journal article" date="2005" name="Physiol. Genomics">
        <title>Cross-species analysis of the mammalian beta-defensin gene family: presence of syntenic gene clusters and preferential expression in the male reproductive tract.</title>
        <authorList>
            <person name="Patil A.A."/>
            <person name="Cai Y."/>
            <person name="Sang Y."/>
            <person name="Blecha F."/>
            <person name="Zhang G."/>
        </authorList>
    </citation>
    <scope>NUCLEOTIDE SEQUENCE [MRNA] (ISOFORM 1)</scope>
</reference>
<reference key="2">
    <citation type="journal article" date="2005" name="Science">
        <title>The transcriptional landscape of the mammalian genome.</title>
        <authorList>
            <person name="Carninci P."/>
            <person name="Kasukawa T."/>
            <person name="Katayama S."/>
            <person name="Gough J."/>
            <person name="Frith M.C."/>
            <person name="Maeda N."/>
            <person name="Oyama R."/>
            <person name="Ravasi T."/>
            <person name="Lenhard B."/>
            <person name="Wells C."/>
            <person name="Kodzius R."/>
            <person name="Shimokawa K."/>
            <person name="Bajic V.B."/>
            <person name="Brenner S.E."/>
            <person name="Batalov S."/>
            <person name="Forrest A.R."/>
            <person name="Zavolan M."/>
            <person name="Davis M.J."/>
            <person name="Wilming L.G."/>
            <person name="Aidinis V."/>
            <person name="Allen J.E."/>
            <person name="Ambesi-Impiombato A."/>
            <person name="Apweiler R."/>
            <person name="Aturaliya R.N."/>
            <person name="Bailey T.L."/>
            <person name="Bansal M."/>
            <person name="Baxter L."/>
            <person name="Beisel K.W."/>
            <person name="Bersano T."/>
            <person name="Bono H."/>
            <person name="Chalk A.M."/>
            <person name="Chiu K.P."/>
            <person name="Choudhary V."/>
            <person name="Christoffels A."/>
            <person name="Clutterbuck D.R."/>
            <person name="Crowe M.L."/>
            <person name="Dalla E."/>
            <person name="Dalrymple B.P."/>
            <person name="de Bono B."/>
            <person name="Della Gatta G."/>
            <person name="di Bernardo D."/>
            <person name="Down T."/>
            <person name="Engstrom P."/>
            <person name="Fagiolini M."/>
            <person name="Faulkner G."/>
            <person name="Fletcher C.F."/>
            <person name="Fukushima T."/>
            <person name="Furuno M."/>
            <person name="Futaki S."/>
            <person name="Gariboldi M."/>
            <person name="Georgii-Hemming P."/>
            <person name="Gingeras T.R."/>
            <person name="Gojobori T."/>
            <person name="Green R.E."/>
            <person name="Gustincich S."/>
            <person name="Harbers M."/>
            <person name="Hayashi Y."/>
            <person name="Hensch T.K."/>
            <person name="Hirokawa N."/>
            <person name="Hill D."/>
            <person name="Huminiecki L."/>
            <person name="Iacono M."/>
            <person name="Ikeo K."/>
            <person name="Iwama A."/>
            <person name="Ishikawa T."/>
            <person name="Jakt M."/>
            <person name="Kanapin A."/>
            <person name="Katoh M."/>
            <person name="Kawasawa Y."/>
            <person name="Kelso J."/>
            <person name="Kitamura H."/>
            <person name="Kitano H."/>
            <person name="Kollias G."/>
            <person name="Krishnan S.P."/>
            <person name="Kruger A."/>
            <person name="Kummerfeld S.K."/>
            <person name="Kurochkin I.V."/>
            <person name="Lareau L.F."/>
            <person name="Lazarevic D."/>
            <person name="Lipovich L."/>
            <person name="Liu J."/>
            <person name="Liuni S."/>
            <person name="McWilliam S."/>
            <person name="Madan Babu M."/>
            <person name="Madera M."/>
            <person name="Marchionni L."/>
            <person name="Matsuda H."/>
            <person name="Matsuzawa S."/>
            <person name="Miki H."/>
            <person name="Mignone F."/>
            <person name="Miyake S."/>
            <person name="Morris K."/>
            <person name="Mottagui-Tabar S."/>
            <person name="Mulder N."/>
            <person name="Nakano N."/>
            <person name="Nakauchi H."/>
            <person name="Ng P."/>
            <person name="Nilsson R."/>
            <person name="Nishiguchi S."/>
            <person name="Nishikawa S."/>
            <person name="Nori F."/>
            <person name="Ohara O."/>
            <person name="Okazaki Y."/>
            <person name="Orlando V."/>
            <person name="Pang K.C."/>
            <person name="Pavan W.J."/>
            <person name="Pavesi G."/>
            <person name="Pesole G."/>
            <person name="Petrovsky N."/>
            <person name="Piazza S."/>
            <person name="Reed J."/>
            <person name="Reid J.F."/>
            <person name="Ring B.Z."/>
            <person name="Ringwald M."/>
            <person name="Rost B."/>
            <person name="Ruan Y."/>
            <person name="Salzberg S.L."/>
            <person name="Sandelin A."/>
            <person name="Schneider C."/>
            <person name="Schoenbach C."/>
            <person name="Sekiguchi K."/>
            <person name="Semple C.A."/>
            <person name="Seno S."/>
            <person name="Sessa L."/>
            <person name="Sheng Y."/>
            <person name="Shibata Y."/>
            <person name="Shimada H."/>
            <person name="Shimada K."/>
            <person name="Silva D."/>
            <person name="Sinclair B."/>
            <person name="Sperling S."/>
            <person name="Stupka E."/>
            <person name="Sugiura K."/>
            <person name="Sultana R."/>
            <person name="Takenaka Y."/>
            <person name="Taki K."/>
            <person name="Tammoja K."/>
            <person name="Tan S.L."/>
            <person name="Tang S."/>
            <person name="Taylor M.S."/>
            <person name="Tegner J."/>
            <person name="Teichmann S.A."/>
            <person name="Ueda H.R."/>
            <person name="van Nimwegen E."/>
            <person name="Verardo R."/>
            <person name="Wei C.L."/>
            <person name="Yagi K."/>
            <person name="Yamanishi H."/>
            <person name="Zabarovsky E."/>
            <person name="Zhu S."/>
            <person name="Zimmer A."/>
            <person name="Hide W."/>
            <person name="Bult C."/>
            <person name="Grimmond S.M."/>
            <person name="Teasdale R.D."/>
            <person name="Liu E.T."/>
            <person name="Brusic V."/>
            <person name="Quackenbush J."/>
            <person name="Wahlestedt C."/>
            <person name="Mattick J.S."/>
            <person name="Hume D.A."/>
            <person name="Kai C."/>
            <person name="Sasaki D."/>
            <person name="Tomaru Y."/>
            <person name="Fukuda S."/>
            <person name="Kanamori-Katayama M."/>
            <person name="Suzuki M."/>
            <person name="Aoki J."/>
            <person name="Arakawa T."/>
            <person name="Iida J."/>
            <person name="Imamura K."/>
            <person name="Itoh M."/>
            <person name="Kato T."/>
            <person name="Kawaji H."/>
            <person name="Kawagashira N."/>
            <person name="Kawashima T."/>
            <person name="Kojima M."/>
            <person name="Kondo S."/>
            <person name="Konno H."/>
            <person name="Nakano K."/>
            <person name="Ninomiya N."/>
            <person name="Nishio T."/>
            <person name="Okada M."/>
            <person name="Plessy C."/>
            <person name="Shibata K."/>
            <person name="Shiraki T."/>
            <person name="Suzuki S."/>
            <person name="Tagami M."/>
            <person name="Waki K."/>
            <person name="Watahiki A."/>
            <person name="Okamura-Oho Y."/>
            <person name="Suzuki H."/>
            <person name="Kawai J."/>
            <person name="Hayashizaki Y."/>
        </authorList>
    </citation>
    <scope>NUCLEOTIDE SEQUENCE [LARGE SCALE MRNA] (ISOFORM 2)</scope>
    <source>
        <strain>C57BL/6J</strain>
        <tissue>Epididymis</tissue>
    </source>
</reference>
<reference key="3">
    <citation type="journal article" date="2005" name="Biochim. Biophys. Acta">
        <title>Discovery and characterization of new epididymis-specific beta-defensins in mice.</title>
        <authorList>
            <person name="Jalkanen J."/>
            <person name="Huhtaniemi I."/>
            <person name="Poutanen M."/>
        </authorList>
    </citation>
    <scope>IDENTIFICATION (ISOFORM 2)</scope>
    <scope>FUNCTION</scope>
    <scope>TISSUE SPECIFICITY</scope>
    <scope>INDUCTION</scope>
    <source>
        <strain>C57BL/6J</strain>
        <tissue>Epididymis</tissue>
    </source>
</reference>
<proteinExistence type="evidence at transcript level"/>
<sequence length="65" mass="7663">MKFHLFFFILLFGATILTAKKSYPEYGSLDLRKECKMRRGHCKLQCSEKELRISFCIRPGTHCCM</sequence>
<accession>Q30KP6</accession>
<accession>Q4FZ55</accession>
<accession>Q8C1G4</accession>
<protein>
    <recommendedName>
        <fullName evidence="7">Beta-defensin 41</fullName>
        <shortName evidence="6">BD-41</shortName>
        <shortName>mBD-41</shortName>
    </recommendedName>
    <alternativeName>
        <fullName evidence="7">Defensin, beta 41</fullName>
    </alternativeName>
</protein>
<organism>
    <name type="scientific">Mus musculus</name>
    <name type="common">Mouse</name>
    <dbReference type="NCBI Taxonomy" id="10090"/>
    <lineage>
        <taxon>Eukaryota</taxon>
        <taxon>Metazoa</taxon>
        <taxon>Chordata</taxon>
        <taxon>Craniata</taxon>
        <taxon>Vertebrata</taxon>
        <taxon>Euteleostomi</taxon>
        <taxon>Mammalia</taxon>
        <taxon>Eutheria</taxon>
        <taxon>Euarchontoglires</taxon>
        <taxon>Glires</taxon>
        <taxon>Rodentia</taxon>
        <taxon>Myomorpha</taxon>
        <taxon>Muroidea</taxon>
        <taxon>Muridae</taxon>
        <taxon>Murinae</taxon>
        <taxon>Mus</taxon>
        <taxon>Mus</taxon>
    </lineage>
</organism>
<feature type="signal peptide" evidence="3">
    <location>
        <begin position="1"/>
        <end position="19"/>
    </location>
</feature>
<feature type="chain" id="PRO_0000352701" description="Beta-defensin 41">
    <location>
        <begin position="20"/>
        <end position="65"/>
    </location>
</feature>
<feature type="disulfide bond" evidence="2">
    <location>
        <begin position="35"/>
        <end position="63"/>
    </location>
</feature>
<feature type="disulfide bond" evidence="2">
    <location>
        <begin position="42"/>
        <end position="56"/>
    </location>
</feature>
<feature type="disulfide bond" evidence="2">
    <location>
        <begin position="46"/>
        <end position="64"/>
    </location>
</feature>
<feature type="splice variant" id="VSP_057922" description="In isoform 2.">
    <original>KKSYPEYGSLDLRKECKMRRGHCKLQCSEKELRISFCIRPGTHCCM</original>
    <variation>RSHIDIKNGIERCEKVRGMCKTVCDIDEYDYGYCIRWRNQCCI</variation>
    <location>
        <begin position="20"/>
        <end position="65"/>
    </location>
</feature>
<keyword id="KW-0025">Alternative splicing</keyword>
<keyword id="KW-0044">Antibiotic</keyword>
<keyword id="KW-0929">Antimicrobial</keyword>
<keyword id="KW-0211">Defensin</keyword>
<keyword id="KW-1015">Disulfide bond</keyword>
<keyword id="KW-1185">Reference proteome</keyword>
<keyword id="KW-0964">Secreted</keyword>
<keyword id="KW-0732">Signal</keyword>